<keyword id="KW-0238">DNA-binding</keyword>
<keyword id="KW-0539">Nucleus</keyword>
<keyword id="KW-1185">Reference proteome</keyword>
<keyword id="KW-0678">Repressor</keyword>
<keyword id="KW-0804">Transcription</keyword>
<keyword id="KW-0805">Transcription regulation</keyword>
<dbReference type="EMBL" id="CR855600">
    <property type="protein sequence ID" value="CAJ81844.1"/>
    <property type="molecule type" value="mRNA"/>
</dbReference>
<dbReference type="RefSeq" id="NP_001017299.1">
    <property type="nucleotide sequence ID" value="NM_001017299.2"/>
</dbReference>
<dbReference type="RefSeq" id="XP_012814565.1">
    <property type="nucleotide sequence ID" value="XM_012959111.3"/>
</dbReference>
<dbReference type="SMR" id="Q28DB3"/>
<dbReference type="FunCoup" id="Q28DB3">
    <property type="interactions" value="277"/>
</dbReference>
<dbReference type="STRING" id="8364.ENSXETP00000033184"/>
<dbReference type="PaxDb" id="8364-ENSXETP00000015728"/>
<dbReference type="GeneID" id="550053"/>
<dbReference type="KEGG" id="xtr:550053"/>
<dbReference type="AGR" id="Xenbase:XB-GENE-867571"/>
<dbReference type="CTD" id="83463"/>
<dbReference type="Xenbase" id="XB-GENE-867571">
    <property type="gene designation" value="mxd3"/>
</dbReference>
<dbReference type="eggNOG" id="KOG2483">
    <property type="taxonomic scope" value="Eukaryota"/>
</dbReference>
<dbReference type="HOGENOM" id="CLU_082604_1_0_1"/>
<dbReference type="InParanoid" id="Q28DB3"/>
<dbReference type="OrthoDB" id="5920083at2759"/>
<dbReference type="TreeFam" id="TF315654"/>
<dbReference type="Proteomes" id="UP000008143">
    <property type="component" value="Chromosome 3"/>
</dbReference>
<dbReference type="Bgee" id="ENSXETG00000007236">
    <property type="expression patterns" value="Expressed in testis and 12 other cell types or tissues"/>
</dbReference>
<dbReference type="GO" id="GO:0005634">
    <property type="term" value="C:nucleus"/>
    <property type="evidence" value="ECO:0007669"/>
    <property type="project" value="UniProtKB-SubCell"/>
</dbReference>
<dbReference type="GO" id="GO:0003677">
    <property type="term" value="F:DNA binding"/>
    <property type="evidence" value="ECO:0007669"/>
    <property type="project" value="UniProtKB-KW"/>
</dbReference>
<dbReference type="GO" id="GO:0046983">
    <property type="term" value="F:protein dimerization activity"/>
    <property type="evidence" value="ECO:0007669"/>
    <property type="project" value="InterPro"/>
</dbReference>
<dbReference type="CDD" id="cd18932">
    <property type="entry name" value="bHLHzip_Mad3"/>
    <property type="match status" value="1"/>
</dbReference>
<dbReference type="Gene3D" id="4.10.280.10">
    <property type="entry name" value="Helix-loop-helix DNA-binding domain"/>
    <property type="match status" value="1"/>
</dbReference>
<dbReference type="InterPro" id="IPR011598">
    <property type="entry name" value="bHLH_dom"/>
</dbReference>
<dbReference type="InterPro" id="IPR036638">
    <property type="entry name" value="HLH_DNA-bd_sf"/>
</dbReference>
<dbReference type="PANTHER" id="PTHR11969:SF6">
    <property type="entry name" value="MAX DIMERIZATION PROTEIN 3"/>
    <property type="match status" value="1"/>
</dbReference>
<dbReference type="PANTHER" id="PTHR11969">
    <property type="entry name" value="MAX DIMERIZATION, MAD"/>
    <property type="match status" value="1"/>
</dbReference>
<dbReference type="Pfam" id="PF00010">
    <property type="entry name" value="HLH"/>
    <property type="match status" value="1"/>
</dbReference>
<dbReference type="SMART" id="SM00353">
    <property type="entry name" value="HLH"/>
    <property type="match status" value="1"/>
</dbReference>
<dbReference type="SUPFAM" id="SSF47459">
    <property type="entry name" value="HLH, helix-loop-helix DNA-binding domain"/>
    <property type="match status" value="1"/>
</dbReference>
<dbReference type="PROSITE" id="PS50888">
    <property type="entry name" value="BHLH"/>
    <property type="match status" value="1"/>
</dbReference>
<feature type="chain" id="PRO_0000253712" description="Max dimerization protein 3">
    <location>
        <begin position="1"/>
        <end position="200"/>
    </location>
</feature>
<feature type="domain" description="bHLH" evidence="2">
    <location>
        <begin position="54"/>
        <end position="106"/>
    </location>
</feature>
<feature type="region of interest" description="Disordered" evidence="3">
    <location>
        <begin position="26"/>
        <end position="56"/>
    </location>
</feature>
<feature type="region of interest" description="Disordered" evidence="3">
    <location>
        <begin position="134"/>
        <end position="164"/>
    </location>
</feature>
<comment type="function">
    <text evidence="1">Transcriptional repressor. Binds with MAX to form a sequence-specific DNA-binding protein complex which recognizes the core sequence 5'-CAC[GA]TG-3' (By similarity).</text>
</comment>
<comment type="subunit">
    <text evidence="1">Efficient DNA binding requires dimerization with another bHLH protein. Binds DNA as a heterodimer with MAX (By similarity).</text>
</comment>
<comment type="subcellular location">
    <subcellularLocation>
        <location evidence="2">Nucleus</location>
    </subcellularLocation>
</comment>
<accession>Q28DB3</accession>
<evidence type="ECO:0000250" key="1"/>
<evidence type="ECO:0000255" key="2">
    <source>
        <dbReference type="PROSITE-ProRule" id="PRU00981"/>
    </source>
</evidence>
<evidence type="ECO:0000256" key="3">
    <source>
        <dbReference type="SAM" id="MobiDB-lite"/>
    </source>
</evidence>
<gene>
    <name type="primary">mxd3</name>
    <name type="synonym">mad3</name>
    <name type="ORF">TEgg037c06.1</name>
</gene>
<proteinExistence type="evidence at transcript level"/>
<organism>
    <name type="scientific">Xenopus tropicalis</name>
    <name type="common">Western clawed frog</name>
    <name type="synonym">Silurana tropicalis</name>
    <dbReference type="NCBI Taxonomy" id="8364"/>
    <lineage>
        <taxon>Eukaryota</taxon>
        <taxon>Metazoa</taxon>
        <taxon>Chordata</taxon>
        <taxon>Craniata</taxon>
        <taxon>Vertebrata</taxon>
        <taxon>Euteleostomi</taxon>
        <taxon>Amphibia</taxon>
        <taxon>Batrachia</taxon>
        <taxon>Anura</taxon>
        <taxon>Pipoidea</taxon>
        <taxon>Pipidae</taxon>
        <taxon>Xenopodinae</taxon>
        <taxon>Xenopus</taxon>
        <taxon>Silurana</taxon>
    </lineage>
</organism>
<reference key="1">
    <citation type="submission" date="2006-06" db="EMBL/GenBank/DDBJ databases">
        <authorList>
            <consortium name="Sanger Xenopus tropicalis EST/cDNA project"/>
        </authorList>
    </citation>
    <scope>NUCLEOTIDE SEQUENCE [LARGE SCALE MRNA]</scope>
    <source>
        <tissue>Egg</tissue>
    </source>
</reference>
<name>MAD3_XENTR</name>
<protein>
    <recommendedName>
        <fullName>Max dimerization protein 3</fullName>
        <shortName>Max dimerizer 3</shortName>
    </recommendedName>
    <alternativeName>
        <fullName>Max-associated protein 3</fullName>
    </alternativeName>
    <alternativeName>
        <fullName>Max-interacting transcriptional repressor MAD3</fullName>
    </alternativeName>
</protein>
<sequence>MEQLPSNLQVLLQAAEYVERREREAEHGYASILPCDPATPGRRKRQRTNSNPDNVRSVHNELEKHRRAQLRRCLEQLKQQVPLSMENSRHTTLSLLHRAKQHIKKLEDQELRAKSLKEKLRVEQQKLRQRLKQLLPPNTERIRTDSLDSSTLSSERSDSDQEDLEVDVEGIILSGNEGELFVSFSAGLEHSYSTPAHAWL</sequence>